<reference key="1">
    <citation type="journal article" date="1993" name="Gene">
        <title>Cloning and sequencing of potato virus Y (Hungarian isolate) genomic RNA.</title>
        <authorList>
            <person name="Thole V."/>
            <person name="Dalmay T."/>
            <person name="Burgyan J."/>
            <person name="Balazs E."/>
        </authorList>
    </citation>
    <scope>NUCLEOTIDE SEQUENCE [GENOMIC RNA]</scope>
</reference>
<organismHost>
    <name type="scientific">Capsicum</name>
    <name type="common">peppers</name>
    <dbReference type="NCBI Taxonomy" id="4071"/>
</organismHost>
<organismHost>
    <name type="scientific">Nicotiana</name>
    <dbReference type="NCBI Taxonomy" id="4085"/>
</organismHost>
<organismHost>
    <name type="scientific">Solanum lycopersicum</name>
    <name type="common">Tomato</name>
    <name type="synonym">Lycopersicon esculentum</name>
    <dbReference type="NCBI Taxonomy" id="4081"/>
</organismHost>
<organismHost>
    <name type="scientific">Solanum tuberosum</name>
    <name type="common">Potato</name>
    <dbReference type="NCBI Taxonomy" id="4113"/>
</organismHost>
<comment type="function">
    <molecule>Helper component proteinase</molecule>
    <text evidence="2">Required for aphid transmission and also has proteolytic activity. Only cleaves a Gly-Gly dipeptide at its own C-terminus. Interacts with virions and aphid stylets. Acts as a suppressor of RNA-mediated gene silencing, also known as post-transcriptional gene silencing (PTGS), a mechanism of plant viral defense that limits the accumulation of viral RNAs. May have RNA-binding activity.</text>
</comment>
<comment type="function">
    <molecule>Movement protein P3N-PIPO</molecule>
    <text evidence="3">Allows efficient cell to cell propagation, by bypassing the host cell wall barrier. Transports viral genome to neighboring plant cells directly through plasmosdesmata, without any budding.</text>
</comment>
<comment type="catalytic activity">
    <molecule>Helper component proteinase</molecule>
    <reaction>
        <text>Hydrolyzes a Gly-|-Gly bond at its own C-terminus, commonly in the sequence -Tyr-Xaa-Val-Gly-|-Gly, in the processing of the potyviral polyprotein.</text>
        <dbReference type="EC" id="3.4.22.45"/>
    </reaction>
</comment>
<comment type="subunit">
    <molecule>Movement protein P3N-PIPO</molecule>
    <text evidence="3">Interacts (via PIPO domain) with host PCaP1 protein; this interaction may help to anchor the movement complex to the plasma membrane from which the complex could move to the plasmodesmata.</text>
</comment>
<comment type="subcellular location">
    <molecule>Movement protein P3N-PIPO</molecule>
    <subcellularLocation>
        <location evidence="3">Host cell junction</location>
        <location evidence="3">Host plasmodesma</location>
    </subcellularLocation>
</comment>
<comment type="alternative products">
    <event type="ribosomal frameshifting"/>
    <isoform>
        <id>P0CK06-1</id>
        <name>P3N-PIPO polyprotein</name>
        <sequence type="displayed"/>
    </isoform>
    <isoform>
        <id>Q02963-1</id>
        <name>Genome polyprotein</name>
        <sequence type="external"/>
    </isoform>
</comment>
<comment type="domain">
    <text evidence="1">The N-terminus of helper component proteinase is involved in interaction with stylets. The central part is involved in interaction with virions and the C-terminus is involved in cell-to cell movement of the virus (By similarity).</text>
</comment>
<comment type="PTM">
    <text evidence="1">Potyviral RNA is expressed as two polyproteins which undergo post-translational proteolytic processing. Genome polyprotein is processed by NIa-pro, P1 and HC-pro proteinases resulting in the production of at least ten individual proteins. P3N-PIPO is cleaved by P1 and HC-pro proteinases resulting in the production of three individual proteins. The P1 proteinase and the HC-pro cleave only their respective C-termini autocatalytically (By similarity).</text>
</comment>
<comment type="miscellaneous">
    <molecule>Isoform P3N-PIPO polyprotein</molecule>
    <text>Produced by -1 ribosomal frameshifting in P3 ORF.</text>
</comment>
<comment type="similarity">
    <text evidence="7">Belongs to the potyviridae P3N-PIPO polyprotein family.</text>
</comment>
<sequence length="986" mass="111327">MATYTSTIQIGSIECKLPYSPAPFGLVAGKREVSTTTDPFASLEMQLSARLRRQEFATIRTSKNGTCMYRYKTDAQIARIQKKREEREREEYNFQMAASSVVSKITIAGGEPPSKLESQVRKGVIHTTPRMRTAKTYRTPKLTEGQMNHLIKQVKQIMSTKGGSVQLISKKSTHVHYKEVLGSHRAVVCTAHMRGLRKRVDFRCDKWTVVRLQHLARTDKWTNQVRATDLRKGDSGVILSNTNLKGHFGRSSEGLFIVRGSHEGKIYDARSKVTQGVMDSMVQFSSAESFWEGLDGNWAQMRYPTDHTCVAGIPVEDCGRVAAIMTHSILPCYKITCPTCAQQYANLPASDLLKILHKHASDGLNRLGADKDRFVHVKKFLTILEHLTEPVDLSLEIFNEVFKSIGEKQQSPFKNLNILNNFFLKGKENTAREWQVAQLSLLELARFQKNRTDNIKKGDISFFRNKLSAKANWNLYLSCDNQLDKNANFLWGQREYHAKRFFSNYFEEIDPAKGYSAYENRLHPNGTRKLAIGNLIVPLDLAEFRRKMKGDYKRQPGVSKKCTSSKDGNYVYPCCCTTLDDGSAVESTFYPPTKKHLVIGNSGDQKYVDLPKGNSEMLYIARQGFCYINIFLAMLINISEEDAKDFTKKVRDMCVPKLGTWPTMMDLATTCAQMKIFYPDVHDAELPRILVDHETQTCHVVDSFGSQTTGYHILKASSVSQLILFANDELESDIKHYRVGGIPNACPELGSTISPFREGGVIMSESAALKLLLKGIFRPKVMRQLLLDEPYLLILSILSPGILMAMYNNGIFELAVKLWINEKQSIAMIASLLSALALRVSAAETLVAQRIIIDTAATDLLDATCDGFNLHLTYPTALMVLQVVKNRNECDDTLFKAGFPSYNTSVVQIMEKKLSKSLERCLERFNLAGKIIRNMVLIQSKTLYHSVHKTHRKGRFERVIQHITTSILGPRCPGGQRHCLRIERAI</sequence>
<protein>
    <recommendedName>
        <fullName>P3N-PIPO polyprotein</fullName>
    </recommendedName>
    <component>
        <recommendedName>
            <fullName>P1 protease</fullName>
            <ecNumber>3.4.21.-</ecNumber>
        </recommendedName>
        <alternativeName>
            <fullName>N-terminal protein</fullName>
        </alternativeName>
        <alternativeName>
            <fullName>P1 proteinase</fullName>
        </alternativeName>
    </component>
    <component>
        <recommendedName>
            <fullName>Helper component proteinase</fullName>
            <shortName>HC-pro</shortName>
            <ecNumber>3.4.22.45</ecNumber>
        </recommendedName>
    </component>
    <component>
        <recommendedName>
            <fullName>Movement protein P3N-PIPO</fullName>
        </recommendedName>
        <alternativeName>
            <fullName>Pretty interesting potyviridae ORF</fullName>
            <shortName>PIPO</shortName>
        </alternativeName>
    </component>
</protein>
<organism>
    <name type="scientific">Potato virus Y (strain Hungarian)</name>
    <name type="common">PVY</name>
    <dbReference type="NCBI Taxonomy" id="31739"/>
    <lineage>
        <taxon>Viruses</taxon>
        <taxon>Riboviria</taxon>
        <taxon>Orthornavirae</taxon>
        <taxon>Pisuviricota</taxon>
        <taxon>Stelpaviricetes</taxon>
        <taxon>Patatavirales</taxon>
        <taxon>Potyviridae</taxon>
        <taxon>Potyvirus</taxon>
        <taxon>Potyvirus yituberosi</taxon>
        <taxon>Potato virus Y</taxon>
    </lineage>
</organism>
<proteinExistence type="inferred from homology"/>
<accession>P0CK06</accession>
<name>MVP_PVYHU</name>
<dbReference type="EC" id="3.4.21.-"/>
<dbReference type="EC" id="3.4.22.45"/>
<dbReference type="EMBL" id="M95491">
    <property type="status" value="NOT_ANNOTATED_CDS"/>
    <property type="molecule type" value="Genomic_RNA"/>
</dbReference>
<dbReference type="SMR" id="P0CK06"/>
<dbReference type="Proteomes" id="UP000008616">
    <property type="component" value="Genome"/>
</dbReference>
<dbReference type="GO" id="GO:0044219">
    <property type="term" value="C:host cell plasmodesma"/>
    <property type="evidence" value="ECO:0007669"/>
    <property type="project" value="UniProtKB-SubCell"/>
</dbReference>
<dbReference type="GO" id="GO:0004197">
    <property type="term" value="F:cysteine-type endopeptidase activity"/>
    <property type="evidence" value="ECO:0007669"/>
    <property type="project" value="InterPro"/>
</dbReference>
<dbReference type="GO" id="GO:0008236">
    <property type="term" value="F:serine-type peptidase activity"/>
    <property type="evidence" value="ECO:0007669"/>
    <property type="project" value="UniProtKB-KW"/>
</dbReference>
<dbReference type="GO" id="GO:0006508">
    <property type="term" value="P:proteolysis"/>
    <property type="evidence" value="ECO:0007669"/>
    <property type="project" value="UniProtKB-KW"/>
</dbReference>
<dbReference type="GO" id="GO:0052170">
    <property type="term" value="P:symbiont-mediated suppression of host innate immune response"/>
    <property type="evidence" value="ECO:0007669"/>
    <property type="project" value="UniProtKB-KW"/>
</dbReference>
<dbReference type="GO" id="GO:0046740">
    <property type="term" value="P:transport of virus in host, cell to cell"/>
    <property type="evidence" value="ECO:0007669"/>
    <property type="project" value="UniProtKB-KW"/>
</dbReference>
<dbReference type="GO" id="GO:0075523">
    <property type="term" value="P:viral translational frameshifting"/>
    <property type="evidence" value="ECO:0007669"/>
    <property type="project" value="UniProtKB-KW"/>
</dbReference>
<dbReference type="Gene3D" id="3.90.70.150">
    <property type="entry name" value="Helper component proteinase"/>
    <property type="match status" value="1"/>
</dbReference>
<dbReference type="InterPro" id="IPR001456">
    <property type="entry name" value="HC-pro"/>
</dbReference>
<dbReference type="InterPro" id="IPR031159">
    <property type="entry name" value="HC_PRO_CPD_dom"/>
</dbReference>
<dbReference type="InterPro" id="IPR042308">
    <property type="entry name" value="HC_PRO_CPD_sf"/>
</dbReference>
<dbReference type="InterPro" id="IPR002540">
    <property type="entry name" value="Pept_S30_P1_potyvir"/>
</dbReference>
<dbReference type="InterPro" id="IPR039560">
    <property type="entry name" value="Potyvirid-P3"/>
</dbReference>
<dbReference type="Pfam" id="PF00851">
    <property type="entry name" value="Peptidase_C6"/>
    <property type="match status" value="1"/>
</dbReference>
<dbReference type="Pfam" id="PF01577">
    <property type="entry name" value="Peptidase_S30"/>
    <property type="match status" value="1"/>
</dbReference>
<dbReference type="Pfam" id="PF13608">
    <property type="entry name" value="Potyvirid-P3"/>
    <property type="match status" value="1"/>
</dbReference>
<dbReference type="PROSITE" id="PS51744">
    <property type="entry name" value="HC_PRO_CPD"/>
    <property type="match status" value="1"/>
</dbReference>
<dbReference type="PROSITE" id="PS51871">
    <property type="entry name" value="PV_P1_PRO"/>
    <property type="match status" value="1"/>
</dbReference>
<keyword id="KW-1031">Host cell junction</keyword>
<keyword id="KW-0945">Host-virus interaction</keyword>
<keyword id="KW-0378">Hydrolase</keyword>
<keyword id="KW-1090">Inhibition of host innate immune response by virus</keyword>
<keyword id="KW-0645">Protease</keyword>
<keyword id="KW-0688">Ribosomal frameshifting</keyword>
<keyword id="KW-0720">Serine protease</keyword>
<keyword id="KW-0941">Suppressor of RNA silencing</keyword>
<keyword id="KW-0813">Transport</keyword>
<keyword id="KW-0899">Viral immunoevasion</keyword>
<keyword id="KW-0916">Viral movement protein</keyword>
<feature type="chain" id="PRO_0000420084" description="P3N-PIPO polyprotein">
    <location>
        <begin position="1"/>
        <end position="986"/>
    </location>
</feature>
<feature type="chain" id="PRO_0000420085" description="P1 protease" evidence="4">
    <location>
        <begin position="1"/>
        <end position="284"/>
    </location>
</feature>
<feature type="chain" id="PRO_0000420086" description="Helper component proteinase" evidence="4">
    <location>
        <begin position="285"/>
        <end position="740"/>
    </location>
</feature>
<feature type="chain" id="PRO_0000408550" description="Movement protein P3N-PIPO">
    <location>
        <begin position="741"/>
        <end position="986"/>
    </location>
</feature>
<feature type="domain" description="Peptidase S30" evidence="6">
    <location>
        <begin position="141"/>
        <end position="284"/>
    </location>
</feature>
<feature type="domain" description="Peptidase C6" evidence="5">
    <location>
        <begin position="618"/>
        <end position="740"/>
    </location>
</feature>
<feature type="short sequence motif" description="Involved in interaction with stylet and aphid transmission" evidence="1">
    <location>
        <begin position="334"/>
        <end position="337"/>
    </location>
</feature>
<feature type="short sequence motif" description="Involved in virions binding and aphid transmission" evidence="1">
    <location>
        <begin position="592"/>
        <end position="594"/>
    </location>
</feature>
<feature type="active site" description="For P1 proteinase activity" evidence="6">
    <location>
        <position position="192"/>
    </location>
</feature>
<feature type="active site" description="For P1 proteinase activity" evidence="6">
    <location>
        <position position="201"/>
    </location>
</feature>
<feature type="active site" description="For P1 proteinase activity" evidence="6">
    <location>
        <position position="235"/>
    </location>
</feature>
<feature type="active site" description="For helper component proteinase activity" evidence="5">
    <location>
        <position position="626"/>
    </location>
</feature>
<feature type="active site" description="For helper component proteinase activity" evidence="5">
    <location>
        <position position="699"/>
    </location>
</feature>
<feature type="site" description="Cleavage; by P1 proteinase" evidence="6">
    <location>
        <begin position="284"/>
        <end position="285"/>
    </location>
</feature>
<feature type="site" description="Cleavage; by autolysis" evidence="5">
    <location>
        <begin position="740"/>
        <end position="741"/>
    </location>
</feature>
<feature type="unsure residue">
    <location>
        <begin position="910"/>
        <end position="916"/>
    </location>
</feature>
<evidence type="ECO:0000250" key="1"/>
<evidence type="ECO:0000250" key="2">
    <source>
        <dbReference type="UniProtKB" id="P04517"/>
    </source>
</evidence>
<evidence type="ECO:0000250" key="3">
    <source>
        <dbReference type="UniProtKB" id="P0CK11"/>
    </source>
</evidence>
<evidence type="ECO:0000255" key="4"/>
<evidence type="ECO:0000255" key="5">
    <source>
        <dbReference type="PROSITE-ProRule" id="PRU01080"/>
    </source>
</evidence>
<evidence type="ECO:0000255" key="6">
    <source>
        <dbReference type="PROSITE-ProRule" id="PRU01219"/>
    </source>
</evidence>
<evidence type="ECO:0000305" key="7"/>